<keyword id="KW-0349">Heme</keyword>
<keyword id="KW-0408">Iron</keyword>
<keyword id="KW-0472">Membrane</keyword>
<keyword id="KW-0479">Metal-binding</keyword>
<keyword id="KW-0503">Monooxygenase</keyword>
<keyword id="KW-0560">Oxidoreductase</keyword>
<keyword id="KW-1185">Reference proteome</keyword>
<keyword id="KW-0812">Transmembrane</keyword>
<keyword id="KW-1133">Transmembrane helix</keyword>
<evidence type="ECO:0000250" key="1"/>
<evidence type="ECO:0000255" key="2"/>
<evidence type="ECO:0000305" key="3"/>
<comment type="cofactor">
    <cofactor evidence="1">
        <name>heme</name>
        <dbReference type="ChEBI" id="CHEBI:30413"/>
    </cofactor>
</comment>
<comment type="subcellular location">
    <subcellularLocation>
        <location evidence="3">Membrane</location>
        <topology evidence="3">Single-pass membrane protein</topology>
    </subcellularLocation>
</comment>
<comment type="similarity">
    <text evidence="3">Belongs to the cytochrome P450 family.</text>
</comment>
<feature type="chain" id="PRO_0000052083" description="Cytochrome P450 71B5">
    <location>
        <begin position="1"/>
        <end position="498"/>
    </location>
</feature>
<feature type="transmembrane region" description="Helical" evidence="2">
    <location>
        <begin position="3"/>
        <end position="23"/>
    </location>
</feature>
<feature type="binding site" description="axial binding residue" evidence="1">
    <location>
        <position position="439"/>
    </location>
    <ligand>
        <name>heme</name>
        <dbReference type="ChEBI" id="CHEBI:30413"/>
    </ligand>
    <ligandPart>
        <name>Fe</name>
        <dbReference type="ChEBI" id="CHEBI:18248"/>
    </ligandPart>
</feature>
<protein>
    <recommendedName>
        <fullName>Cytochrome P450 71B5</fullName>
        <ecNumber>1.14.-.-</ecNumber>
    </recommendedName>
</protein>
<dbReference type="EC" id="1.14.-.-"/>
<dbReference type="EMBL" id="D78601">
    <property type="protein sequence ID" value="BAA28533.1"/>
    <property type="molecule type" value="mRNA"/>
</dbReference>
<dbReference type="EMBL" id="AL132958">
    <property type="protein sequence ID" value="CAB64231.1"/>
    <property type="molecule type" value="Genomic_DNA"/>
</dbReference>
<dbReference type="EMBL" id="CP002686">
    <property type="protein sequence ID" value="AEE79062.1"/>
    <property type="molecule type" value="Genomic_DNA"/>
</dbReference>
<dbReference type="PIR" id="T46174">
    <property type="entry name" value="T46174"/>
</dbReference>
<dbReference type="RefSeq" id="NP_190896.1">
    <property type="nucleotide sequence ID" value="NM_115188.5"/>
</dbReference>
<dbReference type="SMR" id="O65784"/>
<dbReference type="FunCoup" id="O65784">
    <property type="interactions" value="279"/>
</dbReference>
<dbReference type="IntAct" id="O65784">
    <property type="interactions" value="1"/>
</dbReference>
<dbReference type="STRING" id="3702.O65784"/>
<dbReference type="iPTMnet" id="O65784"/>
<dbReference type="PaxDb" id="3702-AT3G53280.1"/>
<dbReference type="ProteomicsDB" id="240387"/>
<dbReference type="EnsemblPlants" id="AT3G53280.1">
    <property type="protein sequence ID" value="AT3G53280.1"/>
    <property type="gene ID" value="AT3G53280"/>
</dbReference>
<dbReference type="GeneID" id="824495"/>
<dbReference type="Gramene" id="AT3G53280.1">
    <property type="protein sequence ID" value="AT3G53280.1"/>
    <property type="gene ID" value="AT3G53280"/>
</dbReference>
<dbReference type="KEGG" id="ath:AT3G53280"/>
<dbReference type="Araport" id="AT3G53280"/>
<dbReference type="TAIR" id="AT3G53280">
    <property type="gene designation" value="CYP71B5"/>
</dbReference>
<dbReference type="eggNOG" id="KOG0156">
    <property type="taxonomic scope" value="Eukaryota"/>
</dbReference>
<dbReference type="HOGENOM" id="CLU_001570_4_1_1"/>
<dbReference type="InParanoid" id="O65784"/>
<dbReference type="OMA" id="GSITMIW"/>
<dbReference type="OrthoDB" id="1470350at2759"/>
<dbReference type="PhylomeDB" id="O65784"/>
<dbReference type="BioCyc" id="ARA:AT3G53280-MONOMER"/>
<dbReference type="PRO" id="PR:O65784"/>
<dbReference type="Proteomes" id="UP000006548">
    <property type="component" value="Chromosome 3"/>
</dbReference>
<dbReference type="ExpressionAtlas" id="O65784">
    <property type="expression patterns" value="baseline and differential"/>
</dbReference>
<dbReference type="GO" id="GO:0016020">
    <property type="term" value="C:membrane"/>
    <property type="evidence" value="ECO:0007669"/>
    <property type="project" value="UniProtKB-SubCell"/>
</dbReference>
<dbReference type="GO" id="GO:0020037">
    <property type="term" value="F:heme binding"/>
    <property type="evidence" value="ECO:0007669"/>
    <property type="project" value="InterPro"/>
</dbReference>
<dbReference type="GO" id="GO:0005506">
    <property type="term" value="F:iron ion binding"/>
    <property type="evidence" value="ECO:0007669"/>
    <property type="project" value="InterPro"/>
</dbReference>
<dbReference type="GO" id="GO:0004497">
    <property type="term" value="F:monooxygenase activity"/>
    <property type="evidence" value="ECO:0007669"/>
    <property type="project" value="UniProtKB-KW"/>
</dbReference>
<dbReference type="GO" id="GO:0016705">
    <property type="term" value="F:oxidoreductase activity, acting on paired donors, with incorporation or reduction of molecular oxygen"/>
    <property type="evidence" value="ECO:0007669"/>
    <property type="project" value="InterPro"/>
</dbReference>
<dbReference type="CDD" id="cd11072">
    <property type="entry name" value="CYP71-like"/>
    <property type="match status" value="1"/>
</dbReference>
<dbReference type="FunFam" id="1.10.630.10:FF:000011">
    <property type="entry name" value="Cytochrome P450 83B1"/>
    <property type="match status" value="1"/>
</dbReference>
<dbReference type="Gene3D" id="1.10.630.10">
    <property type="entry name" value="Cytochrome P450"/>
    <property type="match status" value="1"/>
</dbReference>
<dbReference type="InterPro" id="IPR001128">
    <property type="entry name" value="Cyt_P450"/>
</dbReference>
<dbReference type="InterPro" id="IPR017972">
    <property type="entry name" value="Cyt_P450_CS"/>
</dbReference>
<dbReference type="InterPro" id="IPR002401">
    <property type="entry name" value="Cyt_P450_E_grp-I"/>
</dbReference>
<dbReference type="InterPro" id="IPR036396">
    <property type="entry name" value="Cyt_P450_sf"/>
</dbReference>
<dbReference type="InterPro" id="IPR050193">
    <property type="entry name" value="Cytochrome_P450_71"/>
</dbReference>
<dbReference type="PANTHER" id="PTHR47956">
    <property type="entry name" value="CYTOCHROME P450 71B11-RELATED"/>
    <property type="match status" value="1"/>
</dbReference>
<dbReference type="PANTHER" id="PTHR47956:SF6">
    <property type="entry name" value="CYTOCHROME P450 71B38-RELATED"/>
    <property type="match status" value="1"/>
</dbReference>
<dbReference type="Pfam" id="PF00067">
    <property type="entry name" value="p450"/>
    <property type="match status" value="1"/>
</dbReference>
<dbReference type="PRINTS" id="PR00463">
    <property type="entry name" value="EP450I"/>
</dbReference>
<dbReference type="PRINTS" id="PR00385">
    <property type="entry name" value="P450"/>
</dbReference>
<dbReference type="SUPFAM" id="SSF48264">
    <property type="entry name" value="Cytochrome P450"/>
    <property type="match status" value="1"/>
</dbReference>
<dbReference type="PROSITE" id="PS00086">
    <property type="entry name" value="CYTOCHROME_P450"/>
    <property type="match status" value="1"/>
</dbReference>
<gene>
    <name type="primary">CYP71B5</name>
    <name type="ordered locus">At3g53280</name>
    <name type="ORF">T4D2.200</name>
</gene>
<organism>
    <name type="scientific">Arabidopsis thaliana</name>
    <name type="common">Mouse-ear cress</name>
    <dbReference type="NCBI Taxonomy" id="3702"/>
    <lineage>
        <taxon>Eukaryota</taxon>
        <taxon>Viridiplantae</taxon>
        <taxon>Streptophyta</taxon>
        <taxon>Embryophyta</taxon>
        <taxon>Tracheophyta</taxon>
        <taxon>Spermatophyta</taxon>
        <taxon>Magnoliopsida</taxon>
        <taxon>eudicotyledons</taxon>
        <taxon>Gunneridae</taxon>
        <taxon>Pentapetalae</taxon>
        <taxon>rosids</taxon>
        <taxon>malvids</taxon>
        <taxon>Brassicales</taxon>
        <taxon>Brassicaceae</taxon>
        <taxon>Camelineae</taxon>
        <taxon>Arabidopsis</taxon>
    </lineage>
</organism>
<accession>O65784</accession>
<sequence length="498" mass="56374">MSIFLCFLLLLPLSLIFLKKLLPSKGKLPPGPKGLPIIGNLHQFGRFLHKSLHKISQEYGPVMLLHFGVVPVIIVSSKEGAEEVLKTHDLETCSRPKTVGSGLFTYNFKDIGFAPYGENWREMRKIAVSELFSQKKLKSFRYIREDESQLLVRKVSKSALETPTSSVNLRKVIFTFAASIICRLSFGQNFCDFVDMETVEELVLESETNLGSLAFADFLPAGWIIDRISGQHSTVMKAFSKLTNFFELVIDDHLKSGKIEDHSDIISVMLDMINKPTEVGSYKVTDDHLKGLMSDVFLAGVNAGSITMIWTMTELSRHPRVMRKLQEEIRAALGPNKEKITEEDLEKVEYLKMVIEEAFRLHPPAPLLLPRLTMSDINIQGYSIPKNTMIQINTYTIGRDPKNWTKPDEFIPERFVDNPIEYKGQHFELLPFGAGRRVCPGMATGITIVELGLLSLLYFFDWSLPNGMTTKDIDMEEDGAFVIAKKVSLELVPTLHRW</sequence>
<name>C71B5_ARATH</name>
<reference key="1">
    <citation type="journal article" date="1998" name="Plant Mol. Biol.">
        <title>Cytochrome P450 superfamily in Arabidopsis thaliana: isolation of cDNAs, differential expression, and RFLP mapping of multiple cytochromes P450.</title>
        <authorList>
            <person name="Mizutani M."/>
            <person name="Ward E."/>
            <person name="Ohta D."/>
        </authorList>
    </citation>
    <scope>NUCLEOTIDE SEQUENCE [MRNA]</scope>
    <source>
        <strain>cv. Columbia</strain>
        <tissue>Seedling</tissue>
    </source>
</reference>
<reference key="2">
    <citation type="journal article" date="2000" name="Nature">
        <title>Sequence and analysis of chromosome 3 of the plant Arabidopsis thaliana.</title>
        <authorList>
            <person name="Salanoubat M."/>
            <person name="Lemcke K."/>
            <person name="Rieger M."/>
            <person name="Ansorge W."/>
            <person name="Unseld M."/>
            <person name="Fartmann B."/>
            <person name="Valle G."/>
            <person name="Bloecker H."/>
            <person name="Perez-Alonso M."/>
            <person name="Obermaier B."/>
            <person name="Delseny M."/>
            <person name="Boutry M."/>
            <person name="Grivell L.A."/>
            <person name="Mache R."/>
            <person name="Puigdomenech P."/>
            <person name="De Simone V."/>
            <person name="Choisne N."/>
            <person name="Artiguenave F."/>
            <person name="Robert C."/>
            <person name="Brottier P."/>
            <person name="Wincker P."/>
            <person name="Cattolico L."/>
            <person name="Weissenbach J."/>
            <person name="Saurin W."/>
            <person name="Quetier F."/>
            <person name="Schaefer M."/>
            <person name="Mueller-Auer S."/>
            <person name="Gabel C."/>
            <person name="Fuchs M."/>
            <person name="Benes V."/>
            <person name="Wurmbach E."/>
            <person name="Drzonek H."/>
            <person name="Erfle H."/>
            <person name="Jordan N."/>
            <person name="Bangert S."/>
            <person name="Wiedelmann R."/>
            <person name="Kranz H."/>
            <person name="Voss H."/>
            <person name="Holland R."/>
            <person name="Brandt P."/>
            <person name="Nyakatura G."/>
            <person name="Vezzi A."/>
            <person name="D'Angelo M."/>
            <person name="Pallavicini A."/>
            <person name="Toppo S."/>
            <person name="Simionati B."/>
            <person name="Conrad A."/>
            <person name="Hornischer K."/>
            <person name="Kauer G."/>
            <person name="Loehnert T.-H."/>
            <person name="Nordsiek G."/>
            <person name="Reichelt J."/>
            <person name="Scharfe M."/>
            <person name="Schoen O."/>
            <person name="Bargues M."/>
            <person name="Terol J."/>
            <person name="Climent J."/>
            <person name="Navarro P."/>
            <person name="Collado C."/>
            <person name="Perez-Perez A."/>
            <person name="Ottenwaelder B."/>
            <person name="Duchemin D."/>
            <person name="Cooke R."/>
            <person name="Laudie M."/>
            <person name="Berger-Llauro C."/>
            <person name="Purnelle B."/>
            <person name="Masuy D."/>
            <person name="de Haan M."/>
            <person name="Maarse A.C."/>
            <person name="Alcaraz J.-P."/>
            <person name="Cottet A."/>
            <person name="Casacuberta E."/>
            <person name="Monfort A."/>
            <person name="Argiriou A."/>
            <person name="Flores M."/>
            <person name="Liguori R."/>
            <person name="Vitale D."/>
            <person name="Mannhaupt G."/>
            <person name="Haase D."/>
            <person name="Schoof H."/>
            <person name="Rudd S."/>
            <person name="Zaccaria P."/>
            <person name="Mewes H.-W."/>
            <person name="Mayer K.F.X."/>
            <person name="Kaul S."/>
            <person name="Town C.D."/>
            <person name="Koo H.L."/>
            <person name="Tallon L.J."/>
            <person name="Jenkins J."/>
            <person name="Rooney T."/>
            <person name="Rizzo M."/>
            <person name="Walts A."/>
            <person name="Utterback T."/>
            <person name="Fujii C.Y."/>
            <person name="Shea T.P."/>
            <person name="Creasy T.H."/>
            <person name="Haas B."/>
            <person name="Maiti R."/>
            <person name="Wu D."/>
            <person name="Peterson J."/>
            <person name="Van Aken S."/>
            <person name="Pai G."/>
            <person name="Militscher J."/>
            <person name="Sellers P."/>
            <person name="Gill J.E."/>
            <person name="Feldblyum T.V."/>
            <person name="Preuss D."/>
            <person name="Lin X."/>
            <person name="Nierman W.C."/>
            <person name="Salzberg S.L."/>
            <person name="White O."/>
            <person name="Venter J.C."/>
            <person name="Fraser C.M."/>
            <person name="Kaneko T."/>
            <person name="Nakamura Y."/>
            <person name="Sato S."/>
            <person name="Kato T."/>
            <person name="Asamizu E."/>
            <person name="Sasamoto S."/>
            <person name="Kimura T."/>
            <person name="Idesawa K."/>
            <person name="Kawashima K."/>
            <person name="Kishida Y."/>
            <person name="Kiyokawa C."/>
            <person name="Kohara M."/>
            <person name="Matsumoto M."/>
            <person name="Matsuno A."/>
            <person name="Muraki A."/>
            <person name="Nakayama S."/>
            <person name="Nakazaki N."/>
            <person name="Shinpo S."/>
            <person name="Takeuchi C."/>
            <person name="Wada T."/>
            <person name="Watanabe A."/>
            <person name="Yamada M."/>
            <person name="Yasuda M."/>
            <person name="Tabata S."/>
        </authorList>
    </citation>
    <scope>NUCLEOTIDE SEQUENCE [LARGE SCALE GENOMIC DNA]</scope>
    <source>
        <strain>cv. Columbia</strain>
    </source>
</reference>
<reference key="3">
    <citation type="journal article" date="2017" name="Plant J.">
        <title>Araport11: a complete reannotation of the Arabidopsis thaliana reference genome.</title>
        <authorList>
            <person name="Cheng C.Y."/>
            <person name="Krishnakumar V."/>
            <person name="Chan A.P."/>
            <person name="Thibaud-Nissen F."/>
            <person name="Schobel S."/>
            <person name="Town C.D."/>
        </authorList>
    </citation>
    <scope>GENOME REANNOTATION</scope>
    <source>
        <strain>cv. Columbia</strain>
    </source>
</reference>
<proteinExistence type="evidence at transcript level"/>